<accession>P82951</accession>
<keyword id="KW-0002">3D-structure</keyword>
<keyword id="KW-0044">Antibiotic</keyword>
<keyword id="KW-0929">Antimicrobial</keyword>
<keyword id="KW-0903">Direct protein sequencing</keyword>
<keyword id="KW-1015">Disulfide bond</keyword>
<keyword id="KW-0372">Hormone</keyword>
<keyword id="KW-0964">Secreted</keyword>
<keyword id="KW-0732">Signal</keyword>
<comment type="function">
    <text evidence="1">Seems to act as a signaling molecule involved in the maintenance of iron homeostasis. Seems to be required in conjunction with HFE to regulate both intestinal iron absorption and iron storage in macrophages (By similarity).</text>
</comment>
<comment type="function">
    <text>Antimicrobial activity against Gram-negative bacteria such as E.coli.</text>
</comment>
<comment type="subcellular location">
    <subcellularLocation>
        <location>Secreted</location>
    </subcellularLocation>
</comment>
<comment type="tissue specificity">
    <text evidence="3">Predominantly expressed in liver.</text>
</comment>
<comment type="induction">
    <text>By bacterial challenge.</text>
</comment>
<comment type="mass spectrometry" mass="2255.97" method="MALDI" evidence="3"/>
<comment type="similarity">
    <text evidence="5">Belongs to the hepcidin family.</text>
</comment>
<name>HEPC_MORCS</name>
<proteinExistence type="evidence at protein level"/>
<dbReference type="EMBL" id="AF394245">
    <property type="protein sequence ID" value="AAM28439.1"/>
    <property type="molecule type" value="Genomic_DNA"/>
</dbReference>
<dbReference type="EMBL" id="AF394246">
    <property type="protein sequence ID" value="AAM28440.1"/>
    <property type="molecule type" value="mRNA"/>
</dbReference>
<dbReference type="PDB" id="1S6W">
    <property type="method" value="NMR"/>
    <property type="chains" value="A=65-85"/>
</dbReference>
<dbReference type="PDBsum" id="1S6W"/>
<dbReference type="SMR" id="P82951"/>
<dbReference type="EvolutionaryTrace" id="P82951"/>
<dbReference type="GO" id="GO:0005576">
    <property type="term" value="C:extracellular region"/>
    <property type="evidence" value="ECO:0007669"/>
    <property type="project" value="UniProtKB-SubCell"/>
</dbReference>
<dbReference type="GO" id="GO:0005179">
    <property type="term" value="F:hormone activity"/>
    <property type="evidence" value="ECO:0007669"/>
    <property type="project" value="UniProtKB-KW"/>
</dbReference>
<dbReference type="GO" id="GO:0042742">
    <property type="term" value="P:defense response to bacterium"/>
    <property type="evidence" value="ECO:0007669"/>
    <property type="project" value="UniProtKB-KW"/>
</dbReference>
<dbReference type="GO" id="GO:0006879">
    <property type="term" value="P:intracellular iron ion homeostasis"/>
    <property type="evidence" value="ECO:0007669"/>
    <property type="project" value="InterPro"/>
</dbReference>
<dbReference type="InterPro" id="IPR010500">
    <property type="entry name" value="Hepcidin"/>
</dbReference>
<dbReference type="PANTHER" id="PTHR16877">
    <property type="entry name" value="HEPCIDIN"/>
    <property type="match status" value="1"/>
</dbReference>
<dbReference type="PANTHER" id="PTHR16877:SF0">
    <property type="entry name" value="HEPCIDIN"/>
    <property type="match status" value="1"/>
</dbReference>
<dbReference type="Pfam" id="PF06446">
    <property type="entry name" value="Hepcidin"/>
    <property type="match status" value="1"/>
</dbReference>
<gene>
    <name type="primary">hamp</name>
</gene>
<reference key="1">
    <citation type="journal article" date="2002" name="Eur. J. Biochem.">
        <title>Bass hepcidin is a novel antimicrobial peptide induced by bacterial challenge.</title>
        <authorList>
            <person name="Shike H."/>
            <person name="Lauth X."/>
            <person name="Westerman M.E."/>
            <person name="Ostland V.E."/>
            <person name="Carlberg J.M."/>
            <person name="Van Olst J.C."/>
            <person name="Shimizu C."/>
            <person name="Bulet P."/>
            <person name="Burns J.C."/>
        </authorList>
    </citation>
    <scope>NUCLEOTIDE SEQUENCE [GENOMIC DNA / MRNA]</scope>
    <scope>PROTEIN SEQUENCE OF 65-85</scope>
    <scope>TISSUE SPECIFICITY</scope>
    <scope>ANTIBACTERIAL ACTIVITY</scope>
    <scope>MASS SPECTROMETRY</scope>
    <source>
        <tissue>Gill</tissue>
        <tissue>Skin</tissue>
    </source>
</reference>
<reference key="2">
    <citation type="journal article" date="2005" name="J. Biol. Chem.">
        <title>Bass hepcidin synthesis, solution structure, antimicrobial activities and synergism, and in vivo hepatic response to bacterial infections.</title>
        <authorList>
            <person name="Lauth X."/>
            <person name="Babon J.J."/>
            <person name="Stannard J.A."/>
            <person name="Singh S."/>
            <person name="Nizet V."/>
            <person name="Carlberg J.M."/>
            <person name="Ostland V.E."/>
            <person name="Pennington M.W."/>
            <person name="Norton R.S."/>
            <person name="Westerman M.E."/>
        </authorList>
    </citation>
    <scope>STRUCTURE BY NMR OF 65-85</scope>
    <scope>DISULFIDE BONDS</scope>
</reference>
<evidence type="ECO:0000250" key="1"/>
<evidence type="ECO:0000255" key="2"/>
<evidence type="ECO:0000269" key="3">
    <source>
    </source>
</evidence>
<evidence type="ECO:0000269" key="4">
    <source>
    </source>
</evidence>
<evidence type="ECO:0000305" key="5"/>
<evidence type="ECO:0007829" key="6">
    <source>
        <dbReference type="PDB" id="1S6W"/>
    </source>
</evidence>
<organism>
    <name type="scientific">Morone chrysops x Morone saxatilis</name>
    <name type="common">White bass x Striped bass</name>
    <dbReference type="NCBI Taxonomy" id="45352"/>
    <lineage>
        <taxon>Eukaryota</taxon>
        <taxon>Metazoa</taxon>
        <taxon>Chordata</taxon>
        <taxon>Craniata</taxon>
        <taxon>Vertebrata</taxon>
        <taxon>Euteleostomi</taxon>
        <taxon>Actinopterygii</taxon>
        <taxon>Neopterygii</taxon>
        <taxon>Teleostei</taxon>
        <taxon>Neoteleostei</taxon>
        <taxon>Acanthomorphata</taxon>
        <taxon>Eupercaria</taxon>
        <taxon>Moronidae</taxon>
        <taxon>Morone</taxon>
    </lineage>
</organism>
<feature type="signal peptide" evidence="2">
    <location>
        <begin position="1"/>
        <end position="24"/>
    </location>
</feature>
<feature type="propeptide" id="PRO_0000013391" evidence="3">
    <location>
        <begin position="25"/>
        <end position="64"/>
    </location>
</feature>
<feature type="peptide" id="PRO_0000013392" description="Hepcidin">
    <location>
        <begin position="65"/>
        <end position="85"/>
    </location>
</feature>
<feature type="disulfide bond" evidence="4">
    <location>
        <begin position="66"/>
        <end position="83"/>
    </location>
</feature>
<feature type="disulfide bond" evidence="4">
    <location>
        <begin position="69"/>
        <end position="72"/>
    </location>
</feature>
<feature type="disulfide bond" evidence="4">
    <location>
        <begin position="70"/>
        <end position="79"/>
    </location>
</feature>
<feature type="disulfide bond" evidence="4">
    <location>
        <begin position="73"/>
        <end position="82"/>
    </location>
</feature>
<feature type="strand" evidence="6">
    <location>
        <begin position="67"/>
        <end position="70"/>
    </location>
</feature>
<feature type="strand" evidence="6">
    <location>
        <begin position="80"/>
        <end position="82"/>
    </location>
</feature>
<sequence length="85" mass="9484">MKTFSVAVAVAVVLAFICLQESSAVPVTEVQELEEPMSNEYQEMPVESWKMPYNNRHKRHSSPGGCRFCCNCCPNMSGCGVCCRF</sequence>
<protein>
    <recommendedName>
        <fullName>Hepcidin</fullName>
    </recommendedName>
</protein>